<name>CBX8_HUMAN</name>
<protein>
    <recommendedName>
        <fullName>Chromobox protein homolog 8</fullName>
    </recommendedName>
    <alternativeName>
        <fullName>Polycomb 3 homolog</fullName>
        <shortName>Pc3</shortName>
        <shortName>hPc3</shortName>
    </alternativeName>
    <alternativeName>
        <fullName>Rectachrome 1</fullName>
    </alternativeName>
</protein>
<sequence length="389" mass="43396">MELSAVGERVFAAEALLKRRIRKGRMEYLVKWKGWSQKYSTWEPEENILDARLLAAFEEREREMELYGPKKRGPKPKTFLLKAQAKAKAKTYEFRSDSARGIRIPYPGRSPQDLASTSRAREGLRNMGLSPPASSTSTSSTCRAEAPRDRDRDRDRDRERDRERERERERERERERERERGTSRVDDKPSSPGDSSKKRGPKPRKELPDPSQRPLGEPSAGLGEYLKGRKLDDTPSGAGKFPAGHSVIQLARRQDSDLVQCGVTSPSSAEATGKLAVDTFPARVIKHRAAFLEAKGQGALDPNGTRVRHGSGPPSSGGGLYRDMGAQGGRPSLIARIPVARILGDPEEESWSPSLTNLEKVVVTDVTSNFLTVTIKESNTDQGFFKEKR</sequence>
<gene>
    <name type="primary">CBX8</name>
    <name type="synonym">PC3</name>
    <name type="synonym">RC1</name>
</gene>
<dbReference type="EMBL" id="AF174482">
    <property type="protein sequence ID" value="AAG09180.1"/>
    <property type="molecule type" value="mRNA"/>
</dbReference>
<dbReference type="EMBL" id="AF266479">
    <property type="protein sequence ID" value="AAF76328.2"/>
    <property type="molecule type" value="mRNA"/>
</dbReference>
<dbReference type="EMBL" id="AK074560">
    <property type="protein sequence ID" value="BAC11061.1"/>
    <property type="molecule type" value="mRNA"/>
</dbReference>
<dbReference type="EMBL" id="BC008937">
    <property type="protein sequence ID" value="AAH08937.1"/>
    <property type="molecule type" value="mRNA"/>
</dbReference>
<dbReference type="EMBL" id="BC009376">
    <property type="protein sequence ID" value="AAH09376.1"/>
    <property type="molecule type" value="mRNA"/>
</dbReference>
<dbReference type="EMBL" id="BC019289">
    <property type="protein sequence ID" value="AAH19289.1"/>
    <property type="molecule type" value="mRNA"/>
</dbReference>
<dbReference type="CCDS" id="CCDS11765.1"/>
<dbReference type="RefSeq" id="NP_065700.1">
    <property type="nucleotide sequence ID" value="NM_020649.3"/>
</dbReference>
<dbReference type="PDB" id="2N4Q">
    <property type="method" value="NMR"/>
    <property type="chains" value="A=327-349"/>
</dbReference>
<dbReference type="PDB" id="3I91">
    <property type="method" value="X-ray"/>
    <property type="resolution" value="1.55 A"/>
    <property type="chains" value="A/B=8-61"/>
</dbReference>
<dbReference type="PDB" id="5EQ0">
    <property type="method" value="X-ray"/>
    <property type="resolution" value="1.18 A"/>
    <property type="chains" value="A=7-61"/>
</dbReference>
<dbReference type="PDBsum" id="2N4Q"/>
<dbReference type="PDBsum" id="3I91"/>
<dbReference type="PDBsum" id="5EQ0"/>
<dbReference type="SMR" id="Q9HC52"/>
<dbReference type="BioGRID" id="121487">
    <property type="interactions" value="315"/>
</dbReference>
<dbReference type="ComplexPortal" id="CPX-2621">
    <property type="entry name" value="Polycomb repressive complex 1, RING1-PCGF2-CBX8-PHC1 variant"/>
</dbReference>
<dbReference type="ComplexPortal" id="CPX-2622">
    <property type="entry name" value="Polycomb repressive complex 1, RING1-PCGF2-CBX8-PHC2 variant"/>
</dbReference>
<dbReference type="ComplexPortal" id="CPX-2623">
    <property type="entry name" value="Polycomb repressive complex 1, RING1-PCGF2-CBX8-PHC3 variant"/>
</dbReference>
<dbReference type="ComplexPortal" id="CPX-7516">
    <property type="entry name" value="Polycomb repressive complex 1, RING1-PCGF4-CBX8-PHC1 variant"/>
</dbReference>
<dbReference type="ComplexPortal" id="CPX-7517">
    <property type="entry name" value="Polycomb repressive complex 1, RING1-PCGF4-CBX8-PHC2 variant"/>
</dbReference>
<dbReference type="ComplexPortal" id="CPX-7518">
    <property type="entry name" value="Polycomb repressive complex 1, RING1-PCGF4-CBX8-PHC3 variant"/>
</dbReference>
<dbReference type="ComplexPortal" id="CPX-7533">
    <property type="entry name" value="Polycomb repressive complex 1, RING2-PCGF2-CBX8-PHC1 variant"/>
</dbReference>
<dbReference type="ComplexPortal" id="CPX-7534">
    <property type="entry name" value="Polycomb repressive complex 1, RING2-PCGF2-CBX8-PHC2 variant"/>
</dbReference>
<dbReference type="ComplexPortal" id="CPX-7535">
    <property type="entry name" value="Polycomb repressive complex 1, RING2-PCGF2-CBX8-PHC3 variant"/>
</dbReference>
<dbReference type="ComplexPortal" id="CPX-7554">
    <property type="entry name" value="Polycomb repressive complex 1, RING2-PCGF4-CBX8-PHC1 variant"/>
</dbReference>
<dbReference type="ComplexPortal" id="CPX-7555">
    <property type="entry name" value="Polycomb repressive complex 1, RING2-PCGF4-CBX8-PHC2 variant"/>
</dbReference>
<dbReference type="ComplexPortal" id="CPX-7556">
    <property type="entry name" value="Polycomb repressive complex 1, RING2-PCGF4-CBX8-PHC3 variant"/>
</dbReference>
<dbReference type="CORUM" id="Q9HC52"/>
<dbReference type="DIP" id="DIP-44566N"/>
<dbReference type="FunCoup" id="Q9HC52">
    <property type="interactions" value="1691"/>
</dbReference>
<dbReference type="IntAct" id="Q9HC52">
    <property type="interactions" value="219"/>
</dbReference>
<dbReference type="MINT" id="Q9HC52"/>
<dbReference type="STRING" id="9606.ENSP00000269385"/>
<dbReference type="BindingDB" id="Q9HC52"/>
<dbReference type="ChEMBL" id="CHEMBL3232684"/>
<dbReference type="GlyGen" id="Q9HC52">
    <property type="glycosylation" value="2 sites, 1 N-linked glycan (1 site), 1 O-linked glycan (1 site)"/>
</dbReference>
<dbReference type="iPTMnet" id="Q9HC52"/>
<dbReference type="MetOSite" id="Q9HC52"/>
<dbReference type="PhosphoSitePlus" id="Q9HC52"/>
<dbReference type="SwissPalm" id="Q9HC52"/>
<dbReference type="BioMuta" id="CBX8"/>
<dbReference type="DMDM" id="78099843"/>
<dbReference type="jPOST" id="Q9HC52"/>
<dbReference type="MassIVE" id="Q9HC52"/>
<dbReference type="PaxDb" id="9606-ENSP00000269385"/>
<dbReference type="PeptideAtlas" id="Q9HC52"/>
<dbReference type="ProteomicsDB" id="81638"/>
<dbReference type="Pumba" id="Q9HC52"/>
<dbReference type="ABCD" id="Q9HC52">
    <property type="antibodies" value="1 sequenced antibody"/>
</dbReference>
<dbReference type="Antibodypedia" id="19753">
    <property type="antibodies" value="699 antibodies from 37 providers"/>
</dbReference>
<dbReference type="DNASU" id="57332"/>
<dbReference type="Ensembl" id="ENST00000269385.9">
    <property type="protein sequence ID" value="ENSP00000269385.4"/>
    <property type="gene ID" value="ENSG00000141570.11"/>
</dbReference>
<dbReference type="GeneID" id="57332"/>
<dbReference type="KEGG" id="hsa:57332"/>
<dbReference type="MANE-Select" id="ENST00000269385.9">
    <property type="protein sequence ID" value="ENSP00000269385.4"/>
    <property type="RefSeq nucleotide sequence ID" value="NM_020649.3"/>
    <property type="RefSeq protein sequence ID" value="NP_065700.1"/>
</dbReference>
<dbReference type="UCSC" id="uc002jxd.3">
    <property type="organism name" value="human"/>
</dbReference>
<dbReference type="AGR" id="HGNC:15962"/>
<dbReference type="CTD" id="57332"/>
<dbReference type="DisGeNET" id="57332"/>
<dbReference type="GeneCards" id="CBX8"/>
<dbReference type="HGNC" id="HGNC:15962">
    <property type="gene designation" value="CBX8"/>
</dbReference>
<dbReference type="HPA" id="ENSG00000141570">
    <property type="expression patterns" value="Low tissue specificity"/>
</dbReference>
<dbReference type="MIM" id="617354">
    <property type="type" value="gene"/>
</dbReference>
<dbReference type="neXtProt" id="NX_Q9HC52"/>
<dbReference type="OpenTargets" id="ENSG00000141570"/>
<dbReference type="PharmGKB" id="PA26133"/>
<dbReference type="VEuPathDB" id="HostDB:ENSG00000141570"/>
<dbReference type="eggNOG" id="KOG2748">
    <property type="taxonomic scope" value="Eukaryota"/>
</dbReference>
<dbReference type="GeneTree" id="ENSGT00940000158476"/>
<dbReference type="HOGENOM" id="CLU_042051_0_1_1"/>
<dbReference type="InParanoid" id="Q9HC52"/>
<dbReference type="OMA" id="HPENHGH"/>
<dbReference type="OrthoDB" id="1918685at2759"/>
<dbReference type="PAN-GO" id="Q9HC52">
    <property type="GO annotations" value="5 GO annotations based on evolutionary models"/>
</dbReference>
<dbReference type="PhylomeDB" id="Q9HC52"/>
<dbReference type="TreeFam" id="TF106456"/>
<dbReference type="PathwayCommons" id="Q9HC52"/>
<dbReference type="Reactome" id="R-HSA-2559580">
    <property type="pathway name" value="Oxidative Stress Induced Senescence"/>
</dbReference>
<dbReference type="Reactome" id="R-HSA-3108214">
    <property type="pathway name" value="SUMOylation of DNA damage response and repair proteins"/>
</dbReference>
<dbReference type="Reactome" id="R-HSA-3899300">
    <property type="pathway name" value="SUMOylation of transcription cofactors"/>
</dbReference>
<dbReference type="Reactome" id="R-HSA-4551638">
    <property type="pathway name" value="SUMOylation of chromatin organization proteins"/>
</dbReference>
<dbReference type="Reactome" id="R-HSA-4570464">
    <property type="pathway name" value="SUMOylation of RNA binding proteins"/>
</dbReference>
<dbReference type="Reactome" id="R-HSA-4655427">
    <property type="pathway name" value="SUMOylation of DNA methylation proteins"/>
</dbReference>
<dbReference type="Reactome" id="R-HSA-8939243">
    <property type="pathway name" value="RUNX1 interacts with co-factors whose precise effect on RUNX1 targets is not known"/>
</dbReference>
<dbReference type="Reactome" id="R-HSA-8943724">
    <property type="pathway name" value="Regulation of PTEN gene transcription"/>
</dbReference>
<dbReference type="SignaLink" id="Q9HC52"/>
<dbReference type="BioGRID-ORCS" id="57332">
    <property type="hits" value="15 hits in 1164 CRISPR screens"/>
</dbReference>
<dbReference type="EvolutionaryTrace" id="Q9HC52"/>
<dbReference type="GeneWiki" id="CBX8"/>
<dbReference type="GenomeRNAi" id="57332"/>
<dbReference type="Pharos" id="Q9HC52">
    <property type="development level" value="Tchem"/>
</dbReference>
<dbReference type="PRO" id="PR:Q9HC52"/>
<dbReference type="Proteomes" id="UP000005640">
    <property type="component" value="Chromosome 17"/>
</dbReference>
<dbReference type="RNAct" id="Q9HC52">
    <property type="molecule type" value="protein"/>
</dbReference>
<dbReference type="Bgee" id="ENSG00000141570">
    <property type="expression patterns" value="Expressed in right uterine tube and 102 other cell types or tissues"/>
</dbReference>
<dbReference type="ExpressionAtlas" id="Q9HC52">
    <property type="expression patterns" value="baseline and differential"/>
</dbReference>
<dbReference type="GO" id="GO:0000785">
    <property type="term" value="C:chromatin"/>
    <property type="evidence" value="ECO:0000314"/>
    <property type="project" value="UniProtKB"/>
</dbReference>
<dbReference type="GO" id="GO:0000792">
    <property type="term" value="C:heterochromatin"/>
    <property type="evidence" value="ECO:0007669"/>
    <property type="project" value="Ensembl"/>
</dbReference>
<dbReference type="GO" id="GO:0005654">
    <property type="term" value="C:nucleoplasm"/>
    <property type="evidence" value="ECO:0000314"/>
    <property type="project" value="HPA"/>
</dbReference>
<dbReference type="GO" id="GO:0005634">
    <property type="term" value="C:nucleus"/>
    <property type="evidence" value="ECO:0000314"/>
    <property type="project" value="UniProtKB"/>
</dbReference>
<dbReference type="GO" id="GO:0031519">
    <property type="term" value="C:PcG protein complex"/>
    <property type="evidence" value="ECO:0000314"/>
    <property type="project" value="UniProtKB"/>
</dbReference>
<dbReference type="GO" id="GO:0035102">
    <property type="term" value="C:PRC1 complex"/>
    <property type="evidence" value="ECO:0000314"/>
    <property type="project" value="UniProtKB"/>
</dbReference>
<dbReference type="GO" id="GO:0003682">
    <property type="term" value="F:chromatin binding"/>
    <property type="evidence" value="ECO:0000318"/>
    <property type="project" value="GO_Central"/>
</dbReference>
<dbReference type="GO" id="GO:0061628">
    <property type="term" value="F:histone H3K27me3 reader activity"/>
    <property type="evidence" value="ECO:0000314"/>
    <property type="project" value="UniProtKB"/>
</dbReference>
<dbReference type="GO" id="GO:0035064">
    <property type="term" value="F:methylated histone binding"/>
    <property type="evidence" value="ECO:0000318"/>
    <property type="project" value="GO_Central"/>
</dbReference>
<dbReference type="GO" id="GO:0003727">
    <property type="term" value="F:single-stranded RNA binding"/>
    <property type="evidence" value="ECO:0007669"/>
    <property type="project" value="Ensembl"/>
</dbReference>
<dbReference type="GO" id="GO:0097027">
    <property type="term" value="F:ubiquitin-protein transferase activator activity"/>
    <property type="evidence" value="ECO:0007669"/>
    <property type="project" value="Ensembl"/>
</dbReference>
<dbReference type="GO" id="GO:0070301">
    <property type="term" value="P:cellular response to hydrogen peroxide"/>
    <property type="evidence" value="ECO:0007669"/>
    <property type="project" value="Ensembl"/>
</dbReference>
<dbReference type="GO" id="GO:0000122">
    <property type="term" value="P:negative regulation of transcription by RNA polymerase II"/>
    <property type="evidence" value="ECO:0000315"/>
    <property type="project" value="UniProtKB"/>
</dbReference>
<dbReference type="GO" id="GO:0008284">
    <property type="term" value="P:positive regulation of cell population proliferation"/>
    <property type="evidence" value="ECO:0007669"/>
    <property type="project" value="Ensembl"/>
</dbReference>
<dbReference type="GO" id="GO:0032967">
    <property type="term" value="P:positive regulation of collagen biosynthetic process"/>
    <property type="evidence" value="ECO:0007669"/>
    <property type="project" value="Ensembl"/>
</dbReference>
<dbReference type="GO" id="GO:0045739">
    <property type="term" value="P:positive regulation of DNA repair"/>
    <property type="evidence" value="ECO:0007669"/>
    <property type="project" value="Ensembl"/>
</dbReference>
<dbReference type="CDD" id="cd18627">
    <property type="entry name" value="CD_polycomb_like"/>
    <property type="match status" value="1"/>
</dbReference>
<dbReference type="FunFam" id="2.40.50.40:FF:000006">
    <property type="entry name" value="Chromobox protein homolog 7"/>
    <property type="match status" value="1"/>
</dbReference>
<dbReference type="Gene3D" id="2.40.50.40">
    <property type="match status" value="1"/>
</dbReference>
<dbReference type="IDEAL" id="IID00682"/>
<dbReference type="InterPro" id="IPR033773">
    <property type="entry name" value="CBX7_C"/>
</dbReference>
<dbReference type="InterPro" id="IPR016197">
    <property type="entry name" value="Chromo-like_dom_sf"/>
</dbReference>
<dbReference type="InterPro" id="IPR000953">
    <property type="entry name" value="Chromo/chromo_shadow_dom"/>
</dbReference>
<dbReference type="InterPro" id="IPR023780">
    <property type="entry name" value="Chromo_domain"/>
</dbReference>
<dbReference type="InterPro" id="IPR023779">
    <property type="entry name" value="Chromodomain_CS"/>
</dbReference>
<dbReference type="InterPro" id="IPR052458">
    <property type="entry name" value="PcG_PRC1-like_component"/>
</dbReference>
<dbReference type="PANTHER" id="PTHR46389:SF1">
    <property type="entry name" value="CHROMOBOX PROTEIN HOMOLOG 8"/>
    <property type="match status" value="1"/>
</dbReference>
<dbReference type="PANTHER" id="PTHR46389">
    <property type="entry name" value="POLYCOMB GROUP PROTEIN PC"/>
    <property type="match status" value="1"/>
</dbReference>
<dbReference type="Pfam" id="PF17218">
    <property type="entry name" value="CBX7_C"/>
    <property type="match status" value="1"/>
</dbReference>
<dbReference type="Pfam" id="PF00385">
    <property type="entry name" value="Chromo"/>
    <property type="match status" value="1"/>
</dbReference>
<dbReference type="SMART" id="SM00298">
    <property type="entry name" value="CHROMO"/>
    <property type="match status" value="1"/>
</dbReference>
<dbReference type="SUPFAM" id="SSF54160">
    <property type="entry name" value="Chromo domain-like"/>
    <property type="match status" value="1"/>
</dbReference>
<dbReference type="PROSITE" id="PS00598">
    <property type="entry name" value="CHROMO_1"/>
    <property type="match status" value="1"/>
</dbReference>
<dbReference type="PROSITE" id="PS50013">
    <property type="entry name" value="CHROMO_2"/>
    <property type="match status" value="1"/>
</dbReference>
<keyword id="KW-0002">3D-structure</keyword>
<keyword id="KW-0156">Chromatin regulator</keyword>
<keyword id="KW-0539">Nucleus</keyword>
<keyword id="KW-0597">Phosphoprotein</keyword>
<keyword id="KW-1267">Proteomics identification</keyword>
<keyword id="KW-1185">Reference proteome</keyword>
<keyword id="KW-0678">Repressor</keyword>
<keyword id="KW-0804">Transcription</keyword>
<keyword id="KW-0805">Transcription regulation</keyword>
<comment type="function">
    <text evidence="5">Component of a Polycomb group (PcG) multiprotein PRC1-like complex, a complex class required to maintain the transcriptionally repressive state of many genes, including Hox genes, throughout development. PcG PRC1 complex acts via chromatin remodeling and modification of histones; it mediates monoubiquitination of histone H2A 'Lys-119', rendering chromatin heritably changed in its expressibility.</text>
</comment>
<comment type="subunit">
    <text evidence="1">Component of a PRC1-like complex. Interacts with RING1 RNF2, PCGF1, PCGF2, PCGF3, BMI1, PCGF5 and PCGF6. Interacts with MLLT3 and histone H3. Interacts with PHC2 (By similarity).</text>
</comment>
<comment type="interaction">
    <interactant intactId="EBI-712912">
        <id>Q9HC52</id>
    </interactant>
    <interactant intactId="EBI-11961672">
        <id>O94929-2</id>
        <label>ABLIM3</label>
    </interactant>
    <organismsDiffer>false</organismsDiffer>
    <experiments>3</experiments>
</comment>
<comment type="interaction">
    <interactant intactId="EBI-712912">
        <id>Q9HC52</id>
    </interactant>
    <interactant intactId="EBI-1642333">
        <id>Q9BYV9</id>
        <label>BACH2</label>
    </interactant>
    <organismsDiffer>false</organismsDiffer>
    <experiments>3</experiments>
</comment>
<comment type="interaction">
    <interactant intactId="EBI-712912">
        <id>Q9HC52</id>
    </interactant>
    <interactant intactId="EBI-11524452">
        <id>Q8N9N5-2</id>
        <label>BANP</label>
    </interactant>
    <organismsDiffer>false</organismsDiffer>
    <experiments>3</experiments>
</comment>
<comment type="interaction">
    <interactant intactId="EBI-712912">
        <id>Q9HC52</id>
    </interactant>
    <interactant intactId="EBI-950027">
        <id>Q6W2J9</id>
        <label>BCOR</label>
    </interactant>
    <organismsDiffer>false</organismsDiffer>
    <experiments>9</experiments>
</comment>
<comment type="interaction">
    <interactant intactId="EBI-712912">
        <id>Q9HC52</id>
    </interactant>
    <interactant intactId="EBI-2341576">
        <id>P35226</id>
        <label>BMI1</label>
    </interactant>
    <organismsDiffer>false</organismsDiffer>
    <experiments>31</experiments>
</comment>
<comment type="interaction">
    <interactant intactId="EBI-712912">
        <id>Q9HC52</id>
    </interactant>
    <interactant intactId="EBI-739580">
        <id>Q13137</id>
        <label>CALCOCO2</label>
    </interactant>
    <organismsDiffer>false</organismsDiffer>
    <experiments>6</experiments>
</comment>
<comment type="interaction">
    <interactant intactId="EBI-712912">
        <id>Q9HC52</id>
    </interactant>
    <interactant intactId="EBI-3866279">
        <id>Q9BWT7</id>
        <label>CARD10</label>
    </interactant>
    <organismsDiffer>false</organismsDiffer>
    <experiments>3</experiments>
</comment>
<comment type="interaction">
    <interactant intactId="EBI-712912">
        <id>Q9HC52</id>
    </interactant>
    <interactant intactId="EBI-11530605">
        <id>Q9H257-2</id>
        <label>CARD9</label>
    </interactant>
    <organismsDiffer>false</organismsDiffer>
    <experiments>3</experiments>
</comment>
<comment type="interaction">
    <interactant intactId="EBI-712912">
        <id>Q9HC52</id>
    </interactant>
    <interactant intactId="EBI-722425">
        <id>O00257</id>
        <label>CBX4</label>
    </interactant>
    <organismsDiffer>false</organismsDiffer>
    <experiments>4</experiments>
</comment>
<comment type="interaction">
    <interactant intactId="EBI-712912">
        <id>Q9HC52</id>
    </interactant>
    <interactant intactId="EBI-10171416">
        <id>Q96JN2-2</id>
        <label>CCDC136</label>
    </interactant>
    <organismsDiffer>false</organismsDiffer>
    <experiments>3</experiments>
</comment>
<comment type="interaction">
    <interactant intactId="EBI-712912">
        <id>Q9HC52</id>
    </interactant>
    <interactant intactId="EBI-2808286">
        <id>Q2TAC2</id>
        <label>CCDC57</label>
    </interactant>
    <organismsDiffer>false</organismsDiffer>
    <experiments>3</experiments>
</comment>
<comment type="interaction">
    <interactant intactId="EBI-712912">
        <id>Q9HC52</id>
    </interactant>
    <interactant intactId="EBI-739624">
        <id>Q8NHQ1</id>
        <label>CEP70</label>
    </interactant>
    <organismsDiffer>false</organismsDiffer>
    <experiments>3</experiments>
</comment>
<comment type="interaction">
    <interactant intactId="EBI-712912">
        <id>Q9HC52</id>
    </interactant>
    <interactant intactId="EBI-739789">
        <id>Q92997</id>
        <label>DVL3</label>
    </interactant>
    <organismsDiffer>false</organismsDiffer>
    <experiments>3</experiments>
</comment>
<comment type="interaction">
    <interactant intactId="EBI-712912">
        <id>Q9HC52</id>
    </interactant>
    <interactant intactId="EBI-741101">
        <id>Q13643</id>
        <label>FHL3</label>
    </interactant>
    <organismsDiffer>false</organismsDiffer>
    <experiments>5</experiments>
</comment>
<comment type="interaction">
    <interactant intactId="EBI-712912">
        <id>Q9HC52</id>
    </interactant>
    <interactant intactId="EBI-5661036">
        <id>A1L4K1</id>
        <label>FSD2</label>
    </interactant>
    <organismsDiffer>false</organismsDiffer>
    <experiments>6</experiments>
</comment>
<comment type="interaction">
    <interactant intactId="EBI-712912">
        <id>Q9HC52</id>
    </interactant>
    <interactant intactId="EBI-11022345">
        <id>P51114-2</id>
        <label>FXR1</label>
    </interactant>
    <organismsDiffer>false</organismsDiffer>
    <experiments>3</experiments>
</comment>
<comment type="interaction">
    <interactant intactId="EBI-712912">
        <id>Q9HC52</id>
    </interactant>
    <interactant intactId="EBI-947774">
        <id>O75420</id>
        <label>GIGYF1</label>
    </interactant>
    <organismsDiffer>false</organismsDiffer>
    <experiments>3</experiments>
</comment>
<comment type="interaction">
    <interactant intactId="EBI-712912">
        <id>Q9HC52</id>
    </interactant>
    <interactant intactId="EBI-618309">
        <id>Q08379</id>
        <label>GOLGA2</label>
    </interactant>
    <organismsDiffer>false</organismsDiffer>
    <experiments>6</experiments>
</comment>
<comment type="interaction">
    <interactant intactId="EBI-712912">
        <id>Q9HC52</id>
    </interactant>
    <interactant intactId="EBI-5916454">
        <id>A6NEM1</id>
        <label>GOLGA6L9</label>
    </interactant>
    <organismsDiffer>false</organismsDiffer>
    <experiments>3</experiments>
</comment>
<comment type="interaction">
    <interactant intactId="EBI-712912">
        <id>Q9HC52</id>
    </interactant>
    <interactant intactId="EBI-473189">
        <id>Q96D09</id>
        <label>GPRASP2</label>
    </interactant>
    <organismsDiffer>false</organismsDiffer>
    <experiments>6</experiments>
</comment>
<comment type="interaction">
    <interactant intactId="EBI-712912">
        <id>Q9HC52</id>
    </interactant>
    <interactant intactId="EBI-717919">
        <id>Q4V328</id>
        <label>GRIPAP1</label>
    </interactant>
    <organismsDiffer>false</organismsDiffer>
    <experiments>3</experiments>
</comment>
<comment type="interaction">
    <interactant intactId="EBI-712912">
        <id>Q9HC52</id>
    </interactant>
    <interactant intactId="EBI-5327611">
        <id>P16401</id>
        <label>H1-5</label>
    </interactant>
    <organismsDiffer>false</organismsDiffer>
    <experiments>2</experiments>
</comment>
<comment type="interaction">
    <interactant intactId="EBI-712912">
        <id>Q9HC52</id>
    </interactant>
    <interactant intactId="EBI-2549423">
        <id>Q6NT76</id>
        <label>HMBOX1</label>
    </interactant>
    <organismsDiffer>false</organismsDiffer>
    <experiments>8</experiments>
</comment>
<comment type="interaction">
    <interactant intactId="EBI-712912">
        <id>Q9HC52</id>
    </interactant>
    <interactant intactId="EBI-10961706">
        <id>Q96ED9-2</id>
        <label>HOOK2</label>
    </interactant>
    <organismsDiffer>false</organismsDiffer>
    <experiments>3</experiments>
</comment>
<comment type="interaction">
    <interactant intactId="EBI-712912">
        <id>Q9HC52</id>
    </interactant>
    <interactant intactId="EBI-7116203">
        <id>O75031</id>
        <label>HSF2BP</label>
    </interactant>
    <organismsDiffer>false</organismsDiffer>
    <experiments>3</experiments>
</comment>
<comment type="interaction">
    <interactant intactId="EBI-712912">
        <id>Q9HC52</id>
    </interactant>
    <interactant intactId="EBI-745305">
        <id>Q13422</id>
        <label>IKZF1</label>
    </interactant>
    <organismsDiffer>false</organismsDiffer>
    <experiments>3</experiments>
</comment>
<comment type="interaction">
    <interactant intactId="EBI-712912">
        <id>Q9HC52</id>
    </interactant>
    <interactant intactId="EBI-11522367">
        <id>Q13422-7</id>
        <label>IKZF1</label>
    </interactant>
    <organismsDiffer>false</organismsDiffer>
    <experiments>3</experiments>
</comment>
<comment type="interaction">
    <interactant intactId="EBI-712912">
        <id>Q9HC52</id>
    </interactant>
    <interactant intactId="EBI-12094820">
        <id>A0A0C4DFT8</id>
        <label>JADE2</label>
    </interactant>
    <organismsDiffer>false</organismsDiffer>
    <experiments>3</experiments>
</comment>
<comment type="interaction">
    <interactant intactId="EBI-712912">
        <id>Q9HC52</id>
    </interactant>
    <interactant intactId="EBI-2680803">
        <id>Q96N16</id>
        <label>JAKMIP1</label>
    </interactant>
    <organismsDiffer>false</organismsDiffer>
    <experiments>3</experiments>
</comment>
<comment type="interaction">
    <interactant intactId="EBI-712912">
        <id>Q9HC52</id>
    </interactant>
    <interactant intactId="EBI-2556193">
        <id>Q63ZY3</id>
        <label>KANK2</label>
    </interactant>
    <organismsDiffer>false</organismsDiffer>
    <experiments>3</experiments>
</comment>
<comment type="interaction">
    <interactant intactId="EBI-712912">
        <id>Q9HC52</id>
    </interactant>
    <interactant intactId="EBI-399080">
        <id>Q92993</id>
        <label>KAT5</label>
    </interactant>
    <organismsDiffer>false</organismsDiffer>
    <experiments>2</experiments>
</comment>
<comment type="interaction">
    <interactant intactId="EBI-712912">
        <id>Q9HC52</id>
    </interactant>
    <interactant intactId="EBI-4397613">
        <id>Q7L273</id>
        <label>KCTD9</label>
    </interactant>
    <organismsDiffer>false</organismsDiffer>
    <experiments>6</experiments>
</comment>
<comment type="interaction">
    <interactant intactId="EBI-712912">
        <id>Q9HC52</id>
    </interactant>
    <interactant intactId="EBI-2125614">
        <id>Q9BVG8</id>
        <label>KIFC3</label>
    </interactant>
    <organismsDiffer>false</organismsDiffer>
    <experiments>3</experiments>
</comment>
<comment type="interaction">
    <interactant intactId="EBI-712912">
        <id>Q9HC52</id>
    </interactant>
    <interactant intactId="EBI-14069005">
        <id>Q9BVG8-5</id>
        <label>KIFC3</label>
    </interactant>
    <organismsDiffer>false</organismsDiffer>
    <experiments>3</experiments>
</comment>
<comment type="interaction">
    <interactant intactId="EBI-712912">
        <id>Q9HC52</id>
    </interactant>
    <interactant intactId="EBI-948001">
        <id>Q15323</id>
        <label>KRT31</label>
    </interactant>
    <organismsDiffer>false</organismsDiffer>
    <experiments>3</experiments>
</comment>
<comment type="interaction">
    <interactant intactId="EBI-712912">
        <id>Q9HC52</id>
    </interactant>
    <interactant intactId="EBI-1047093">
        <id>O76011</id>
        <label>KRT34</label>
    </interactant>
    <organismsDiffer>false</organismsDiffer>
    <experiments>3</experiments>
</comment>
<comment type="interaction">
    <interactant intactId="EBI-712912">
        <id>Q9HC52</id>
    </interactant>
    <interactant intactId="EBI-10171697">
        <id>Q6A162</id>
        <label>KRT40</label>
    </interactant>
    <organismsDiffer>false</organismsDiffer>
    <experiments>6</experiments>
</comment>
<comment type="interaction">
    <interactant intactId="EBI-712912">
        <id>Q9HC52</id>
    </interactant>
    <interactant intactId="EBI-347416">
        <id>Q9Y333</id>
        <label>LSM2</label>
    </interactant>
    <organismsDiffer>false</organismsDiffer>
    <experiments>3</experiments>
</comment>
<comment type="interaction">
    <interactant intactId="EBI-712912">
        <id>Q9HC52</id>
    </interactant>
    <interactant intactId="EBI-741037">
        <id>Q9BRK4</id>
        <label>LZTS2</label>
    </interactant>
    <organismsDiffer>false</organismsDiffer>
    <experiments>6</experiments>
</comment>
<comment type="interaction">
    <interactant intactId="EBI-712912">
        <id>Q9HC52</id>
    </interactant>
    <interactant intactId="EBI-11323212">
        <id>Q8IYB1</id>
        <label>MB21D2</label>
    </interactant>
    <organismsDiffer>false</organismsDiffer>
    <experiments>3</experiments>
</comment>
<comment type="interaction">
    <interactant intactId="EBI-712912">
        <id>Q9HC52</id>
    </interactant>
    <interactant intactId="EBI-307531">
        <id>P23508</id>
        <label>MCC</label>
    </interactant>
    <organismsDiffer>false</organismsDiffer>
    <experiments>3</experiments>
</comment>
<comment type="interaction">
    <interactant intactId="EBI-712912">
        <id>Q9HC52</id>
    </interactant>
    <interactant intactId="EBI-724076">
        <id>Q99750</id>
        <label>MDFI</label>
    </interactant>
    <organismsDiffer>false</organismsDiffer>
    <experiments>3</experiments>
</comment>
<comment type="interaction">
    <interactant intactId="EBI-712912">
        <id>Q9HC52</id>
    </interactant>
    <interactant intactId="EBI-10172526">
        <id>Q9UJV3-2</id>
        <label>MID2</label>
    </interactant>
    <organismsDiffer>false</organismsDiffer>
    <experiments>6</experiments>
</comment>
<comment type="interaction">
    <interactant intactId="EBI-712912">
        <id>Q9HC52</id>
    </interactant>
    <interactant intactId="EBI-716132">
        <id>P42568</id>
        <label>MLLT3</label>
    </interactant>
    <organismsDiffer>false</organismsDiffer>
    <experiments>2</experiments>
</comment>
<comment type="interaction">
    <interactant intactId="EBI-712912">
        <id>Q9HC52</id>
    </interactant>
    <interactant intactId="EBI-1055820">
        <id>Q9HCE1</id>
        <label>MOV10</label>
    </interactant>
    <organismsDiffer>false</organismsDiffer>
    <experiments>5</experiments>
</comment>
<comment type="interaction">
    <interactant intactId="EBI-712912">
        <id>Q9HC52</id>
    </interactant>
    <interactant intactId="EBI-742948">
        <id>Q5JR59</id>
        <label>MTUS2</label>
    </interactant>
    <organismsDiffer>false</organismsDiffer>
    <experiments>3</experiments>
</comment>
<comment type="interaction">
    <interactant intactId="EBI-712912">
        <id>Q9HC52</id>
    </interactant>
    <interactant intactId="EBI-11522433">
        <id>Q5JR59-3</id>
        <label>MTUS2</label>
    </interactant>
    <organismsDiffer>false</organismsDiffer>
    <experiments>3</experiments>
</comment>
<comment type="interaction">
    <interactant intactId="EBI-712912">
        <id>Q9HC52</id>
    </interactant>
    <interactant intactId="EBI-8641936">
        <id>Q15742</id>
        <label>NAB2</label>
    </interactant>
    <organismsDiffer>false</organismsDiffer>
    <experiments>3</experiments>
</comment>
<comment type="interaction">
    <interactant intactId="EBI-712912">
        <id>Q9HC52</id>
    </interactant>
    <interactant intactId="EBI-749901">
        <id>Q9BSM1</id>
        <label>PCGF1</label>
    </interactant>
    <organismsDiffer>false</organismsDiffer>
    <experiments>8</experiments>
</comment>
<comment type="interaction">
    <interactant intactId="EBI-712912">
        <id>Q9HC52</id>
    </interactant>
    <interactant intactId="EBI-2129767">
        <id>P35227</id>
        <label>PCGF2</label>
    </interactant>
    <organismsDiffer>false</organismsDiffer>
    <experiments>13</experiments>
</comment>
<comment type="interaction">
    <interactant intactId="EBI-712912">
        <id>Q9HC52</id>
    </interactant>
    <interactant intactId="EBI-2339807">
        <id>Q3KNV8</id>
        <label>PCGF3</label>
    </interactant>
    <organismsDiffer>false</organismsDiffer>
    <experiments>4</experiments>
</comment>
<comment type="interaction">
    <interactant intactId="EBI-712912">
        <id>Q9HC52</id>
    </interactant>
    <interactant intactId="EBI-2827999">
        <id>Q86SE9</id>
        <label>PCGF5</label>
    </interactant>
    <organismsDiffer>false</organismsDiffer>
    <experiments>4</experiments>
</comment>
<comment type="interaction">
    <interactant intactId="EBI-712912">
        <id>Q9HC52</id>
    </interactant>
    <interactant intactId="EBI-1048026">
        <id>Q9BYE7</id>
        <label>PCGF6</label>
    </interactant>
    <organismsDiffer>false</organismsDiffer>
    <experiments>5</experiments>
</comment>
<comment type="interaction">
    <interactant intactId="EBI-712912">
        <id>Q9HC52</id>
    </interactant>
    <interactant intactId="EBI-7971325">
        <id>Q9C0D0</id>
        <label>PHACTR1</label>
    </interactant>
    <organismsDiffer>false</organismsDiffer>
    <experiments>3</experiments>
</comment>
<comment type="interaction">
    <interactant intactId="EBI-712912">
        <id>Q9HC52</id>
    </interactant>
    <interactant intactId="EBI-713786">
        <id>Q8IXK0</id>
        <label>PHC2</label>
    </interactant>
    <organismsDiffer>false</organismsDiffer>
    <experiments>8</experiments>
</comment>
<comment type="interaction">
    <interactant intactId="EBI-712912">
        <id>Q9HC52</id>
    </interactant>
    <interactant intactId="EBI-14066006">
        <id>Q4G0R1</id>
        <label>PIBF1</label>
    </interactant>
    <organismsDiffer>false</organismsDiffer>
    <experiments>3</experiments>
</comment>
<comment type="interaction">
    <interactant intactId="EBI-712912">
        <id>Q9HC52</id>
    </interactant>
    <interactant intactId="EBI-79165">
        <id>Q9NRD5</id>
        <label>PICK1</label>
    </interactant>
    <organismsDiffer>false</organismsDiffer>
    <experiments>3</experiments>
</comment>
<comment type="interaction">
    <interactant intactId="EBI-712912">
        <id>Q9HC52</id>
    </interactant>
    <interactant intactId="EBI-10232538">
        <id>Q8WWB5</id>
        <label>PIH1D2</label>
    </interactant>
    <organismsDiffer>false</organismsDiffer>
    <experiments>3</experiments>
</comment>
<comment type="interaction">
    <interactant intactId="EBI-712912">
        <id>Q9HC52</id>
    </interactant>
    <interactant intactId="EBI-742388">
        <id>Q9H8W4</id>
        <label>PLEKHF2</label>
    </interactant>
    <organismsDiffer>false</organismsDiffer>
    <experiments>3</experiments>
</comment>
<comment type="interaction">
    <interactant intactId="EBI-712912">
        <id>Q9HC52</id>
    </interactant>
    <interactant intactId="EBI-302345">
        <id>Q8ND90</id>
        <label>PNMA1</label>
    </interactant>
    <organismsDiffer>false</organismsDiffer>
    <experiments>3</experiments>
</comment>
<comment type="interaction">
    <interactant intactId="EBI-712912">
        <id>Q9HC52</id>
    </interactant>
    <interactant intactId="EBI-302355">
        <id>Q9UL42</id>
        <label>PNMA2</label>
    </interactant>
    <organismsDiffer>false</organismsDiffer>
    <experiments>6</experiments>
</comment>
<comment type="interaction">
    <interactant intactId="EBI-712912">
        <id>Q9HC52</id>
    </interactant>
    <interactant intactId="EBI-1055079">
        <id>O15160</id>
        <label>POLR1C</label>
    </interactant>
    <organismsDiffer>false</organismsDiffer>
    <experiments>3</experiments>
</comment>
<comment type="interaction">
    <interactant intactId="EBI-712912">
        <id>Q9HC52</id>
    </interactant>
    <interactant intactId="EBI-11320284">
        <id>Q9NQX0</id>
        <label>PRDM6</label>
    </interactant>
    <organismsDiffer>false</organismsDiffer>
    <experiments>3</experiments>
</comment>
<comment type="interaction">
    <interactant intactId="EBI-712912">
        <id>Q9HC52</id>
    </interactant>
    <interactant intactId="EBI-2805516">
        <id>P31321</id>
        <label>PRKAR1B</label>
    </interactant>
    <organismsDiffer>false</organismsDiffer>
    <experiments>3</experiments>
</comment>
<comment type="interaction">
    <interactant intactId="EBI-712912">
        <id>Q9HC52</id>
    </interactant>
    <interactant intactId="EBI-2845202">
        <id>Q86WH2</id>
        <label>RASSF3</label>
    </interactant>
    <organismsDiffer>false</organismsDiffer>
    <experiments>3</experiments>
</comment>
<comment type="interaction">
    <interactant intactId="EBI-712912">
        <id>Q9HC52</id>
    </interactant>
    <interactant intactId="EBI-752313">
        <id>Q06587</id>
        <label>RING1</label>
    </interactant>
    <organismsDiffer>false</organismsDiffer>
    <experiments>18</experiments>
</comment>
<comment type="interaction">
    <interactant intactId="EBI-712912">
        <id>Q9HC52</id>
    </interactant>
    <interactant intactId="EBI-722416">
        <id>Q99496</id>
        <label>RNF2</label>
    </interactant>
    <organismsDiffer>false</organismsDiffer>
    <experiments>11</experiments>
</comment>
<comment type="interaction">
    <interactant intactId="EBI-712912">
        <id>Q9HC52</id>
    </interactant>
    <interactant intactId="EBI-1050213">
        <id>Q96KN7</id>
        <label>RPGRIP1</label>
    </interactant>
    <organismsDiffer>false</organismsDiffer>
    <experiments>3</experiments>
</comment>
<comment type="interaction">
    <interactant intactId="EBI-712912">
        <id>Q9HC52</id>
    </interactant>
    <interactant intactId="EBI-6117072">
        <id>Q86VW0</id>
        <label>SESTD1</label>
    </interactant>
    <organismsDiffer>false</organismsDiffer>
    <experiments>3</experiments>
</comment>
<comment type="interaction">
    <interactant intactId="EBI-712912">
        <id>Q9HC52</id>
    </interactant>
    <interactant intactId="EBI-3505701">
        <id>P35711</id>
        <label>SOX5</label>
    </interactant>
    <organismsDiffer>false</organismsDiffer>
    <experiments>3</experiments>
</comment>
<comment type="interaction">
    <interactant intactId="EBI-712912">
        <id>Q9HC52</id>
    </interactant>
    <interactant intactId="EBI-529518">
        <id>Q86VP1</id>
        <label>TAX1BP1</label>
    </interactant>
    <organismsDiffer>false</organismsDiffer>
    <experiments>3</experiments>
</comment>
<comment type="interaction">
    <interactant intactId="EBI-712912">
        <id>Q9HC52</id>
    </interactant>
    <interactant intactId="EBI-11139477">
        <id>Q96N21</id>
        <label>TEPSIN</label>
    </interactant>
    <organismsDiffer>false</organismsDiffer>
    <experiments>3</experiments>
</comment>
<comment type="interaction">
    <interactant intactId="EBI-712912">
        <id>Q9HC52</id>
    </interactant>
    <interactant intactId="EBI-717422">
        <id>Q12800</id>
        <label>TFCP2</label>
    </interactant>
    <organismsDiffer>false</organismsDiffer>
    <experiments>6</experiments>
</comment>
<comment type="interaction">
    <interactant intactId="EBI-712912">
        <id>Q9HC52</id>
    </interactant>
    <interactant intactId="EBI-1105213">
        <id>Q9UBB9</id>
        <label>TFIP11</label>
    </interactant>
    <organismsDiffer>false</organismsDiffer>
    <experiments>3</experiments>
</comment>
<comment type="interaction">
    <interactant intactId="EBI-712912">
        <id>Q9HC52</id>
    </interactant>
    <interactant intactId="EBI-355744">
        <id>Q12933</id>
        <label>TRAF2</label>
    </interactant>
    <organismsDiffer>false</organismsDiffer>
    <experiments>6</experiments>
</comment>
<comment type="interaction">
    <interactant intactId="EBI-712912">
        <id>Q9HC52</id>
    </interactant>
    <interactant intactId="EBI-492476">
        <id>Q96RU7</id>
        <label>TRIB3</label>
    </interactant>
    <organismsDiffer>false</organismsDiffer>
    <experiments>3</experiments>
</comment>
<comment type="interaction">
    <interactant intactId="EBI-712912">
        <id>Q9HC52</id>
    </interactant>
    <interactant intactId="EBI-740098">
        <id>P36406</id>
        <label>TRIM23</label>
    </interactant>
    <organismsDiffer>false</organismsDiffer>
    <experiments>3</experiments>
</comment>
<comment type="interaction">
    <interactant intactId="EBI-712912">
        <id>Q9HC52</id>
    </interactant>
    <interactant intactId="EBI-719493">
        <id>P14373</id>
        <label>TRIM27</label>
    </interactant>
    <organismsDiffer>false</organismsDiffer>
    <experiments>3</experiments>
</comment>
<comment type="interaction">
    <interactant intactId="EBI-712912">
        <id>Q9HC52</id>
    </interactant>
    <interactant intactId="EBI-2130429">
        <id>Q9BYV2</id>
        <label>TRIM54</label>
    </interactant>
    <organismsDiffer>false</organismsDiffer>
    <experiments>3</experiments>
</comment>
<comment type="interaction">
    <interactant intactId="EBI-712912">
        <id>Q9HC52</id>
    </interactant>
    <interactant intactId="EBI-739485">
        <id>Q9Y3Q8</id>
        <label>TSC22D4</label>
    </interactant>
    <organismsDiffer>false</organismsDiffer>
    <experiments>3</experiments>
</comment>
<comment type="interaction">
    <interactant intactId="EBI-712912">
        <id>Q9HC52</id>
    </interactant>
    <interactant intactId="EBI-744794">
        <id>Q9BZW7</id>
        <label>TSGA10</label>
    </interactant>
    <organismsDiffer>false</organismsDiffer>
    <experiments>3</experiments>
</comment>
<comment type="interaction">
    <interactant intactId="EBI-712912">
        <id>Q9HC52</id>
    </interactant>
    <interactant intactId="EBI-9090990">
        <id>Q5W5X9-3</id>
        <label>TTC23</label>
    </interactant>
    <organismsDiffer>false</organismsDiffer>
    <experiments>3</experiments>
</comment>
<comment type="interaction">
    <interactant intactId="EBI-712912">
        <id>Q9HC52</id>
    </interactant>
    <interactant intactId="EBI-8601749">
        <id>Q495M9</id>
        <label>USH1G</label>
    </interactant>
    <organismsDiffer>false</organismsDiffer>
    <experiments>3</experiments>
</comment>
<comment type="interaction">
    <interactant intactId="EBI-712912">
        <id>Q9HC52</id>
    </interactant>
    <interactant intactId="EBI-306876">
        <id>P51784</id>
        <label>USP11</label>
    </interactant>
    <organismsDiffer>false</organismsDiffer>
    <experiments>5</experiments>
</comment>
<comment type="interaction">
    <interactant intactId="EBI-712912">
        <id>Q9HC52</id>
    </interactant>
    <interactant intactId="EBI-302474">
        <id>Q93009</id>
        <label>USP7</label>
    </interactant>
    <organismsDiffer>false</organismsDiffer>
    <experiments>7</experiments>
</comment>
<comment type="interaction">
    <interactant intactId="EBI-712912">
        <id>Q9HC52</id>
    </interactant>
    <interactant intactId="EBI-353844">
        <id>P08670</id>
        <label>VIM</label>
    </interactant>
    <organismsDiffer>false</organismsDiffer>
    <experiments>3</experiments>
</comment>
<comment type="interaction">
    <interactant intactId="EBI-712912">
        <id>Q9HC52</id>
    </interactant>
    <interactant intactId="EBI-10176632">
        <id>O43829</id>
        <label>ZBTB14</label>
    </interactant>
    <organismsDiffer>false</organismsDiffer>
    <experiments>6</experiments>
</comment>
<comment type="interaction">
    <interactant intactId="EBI-712912">
        <id>Q9HC52</id>
    </interactant>
    <interactant intactId="EBI-742740">
        <id>Q96BR9</id>
        <label>ZBTB8A</label>
    </interactant>
    <organismsDiffer>false</organismsDiffer>
    <experiments>3</experiments>
</comment>
<comment type="interaction">
    <interactant intactId="EBI-712912">
        <id>Q9HC52</id>
    </interactant>
    <interactant intactId="EBI-395708">
        <id>Q96C00</id>
        <label>ZBTB9</label>
    </interactant>
    <organismsDiffer>false</organismsDiffer>
    <experiments>3</experiments>
</comment>
<comment type="interaction">
    <interactant intactId="EBI-712912">
        <id>Q9HC52</id>
    </interactant>
    <interactant intactId="EBI-6874731">
        <id>O15231</id>
        <label>ZNF185</label>
    </interactant>
    <organismsDiffer>false</organismsDiffer>
    <experiments>3</experiments>
</comment>
<comment type="interaction">
    <interactant intactId="EBI-712912">
        <id>Q9HC52</id>
    </interactant>
    <interactant intactId="EBI-527853">
        <id>Q9UGI0</id>
        <label>ZRANB1</label>
    </interactant>
    <organismsDiffer>false</organismsDiffer>
    <experiments>3</experiments>
</comment>
<comment type="subcellular location">
    <subcellularLocation>
        <location evidence="5">Nucleus</location>
    </subcellularLocation>
</comment>
<comment type="miscellaneous">
    <text>The human orthologuous proteins of Drosophila Polycomb group protein Pc, CBX2, CBX4, CBX6, CBX7 and CBX8, show distinct nuclear localizations, contribute differently to transcriptional repression, and appear to be part of distinct PRC1-like protein complexes. The hPRC-H complex purification reported by PubMed:12167701 probably presents a mixture of different complexes.</text>
</comment>
<proteinExistence type="evidence at protein level"/>
<accession>Q9HC52</accession>
<accession>Q96H39</accession>
<accession>Q9NR07</accession>
<reference key="1">
    <citation type="journal article" date="2000" name="J. Biol. Chem.">
        <title>HPC3 is a new human polycomb orthologue that interacts and associates with RING1 and Bmi1 and has transcriptional repression properties.</title>
        <authorList>
            <person name="Bardos J.I."/>
            <person name="Saurin A.J."/>
            <person name="Tissot C."/>
            <person name="Duprez E."/>
            <person name="Freemont P.S."/>
        </authorList>
    </citation>
    <scope>NUCLEOTIDE SEQUENCE [MRNA]</scope>
</reference>
<reference key="2">
    <citation type="submission" date="2002-12" db="EMBL/GenBank/DDBJ databases">
        <title>Isolation of Polycomb and Trithorax-related genes that are expressed in human colorectal mucosa.</title>
        <authorList>
            <person name="Michael M.Z."/>
            <person name="James R.J."/>
        </authorList>
    </citation>
    <scope>NUCLEOTIDE SEQUENCE [MRNA]</scope>
    <scope>VARIANT VAL-317</scope>
    <source>
        <tissue>Colon carcinoma</tissue>
    </source>
</reference>
<reference key="3">
    <citation type="journal article" date="2004" name="Nat. Genet.">
        <title>Complete sequencing and characterization of 21,243 full-length human cDNAs.</title>
        <authorList>
            <person name="Ota T."/>
            <person name="Suzuki Y."/>
            <person name="Nishikawa T."/>
            <person name="Otsuki T."/>
            <person name="Sugiyama T."/>
            <person name="Irie R."/>
            <person name="Wakamatsu A."/>
            <person name="Hayashi K."/>
            <person name="Sato H."/>
            <person name="Nagai K."/>
            <person name="Kimura K."/>
            <person name="Makita H."/>
            <person name="Sekine M."/>
            <person name="Obayashi M."/>
            <person name="Nishi T."/>
            <person name="Shibahara T."/>
            <person name="Tanaka T."/>
            <person name="Ishii S."/>
            <person name="Yamamoto J."/>
            <person name="Saito K."/>
            <person name="Kawai Y."/>
            <person name="Isono Y."/>
            <person name="Nakamura Y."/>
            <person name="Nagahari K."/>
            <person name="Murakami K."/>
            <person name="Yasuda T."/>
            <person name="Iwayanagi T."/>
            <person name="Wagatsuma M."/>
            <person name="Shiratori A."/>
            <person name="Sudo H."/>
            <person name="Hosoiri T."/>
            <person name="Kaku Y."/>
            <person name="Kodaira H."/>
            <person name="Kondo H."/>
            <person name="Sugawara M."/>
            <person name="Takahashi M."/>
            <person name="Kanda K."/>
            <person name="Yokoi T."/>
            <person name="Furuya T."/>
            <person name="Kikkawa E."/>
            <person name="Omura Y."/>
            <person name="Abe K."/>
            <person name="Kamihara K."/>
            <person name="Katsuta N."/>
            <person name="Sato K."/>
            <person name="Tanikawa M."/>
            <person name="Yamazaki M."/>
            <person name="Ninomiya K."/>
            <person name="Ishibashi T."/>
            <person name="Yamashita H."/>
            <person name="Murakawa K."/>
            <person name="Fujimori K."/>
            <person name="Tanai H."/>
            <person name="Kimata M."/>
            <person name="Watanabe M."/>
            <person name="Hiraoka S."/>
            <person name="Chiba Y."/>
            <person name="Ishida S."/>
            <person name="Ono Y."/>
            <person name="Takiguchi S."/>
            <person name="Watanabe S."/>
            <person name="Yosida M."/>
            <person name="Hotuta T."/>
            <person name="Kusano J."/>
            <person name="Kanehori K."/>
            <person name="Takahashi-Fujii A."/>
            <person name="Hara H."/>
            <person name="Tanase T.-O."/>
            <person name="Nomura Y."/>
            <person name="Togiya S."/>
            <person name="Komai F."/>
            <person name="Hara R."/>
            <person name="Takeuchi K."/>
            <person name="Arita M."/>
            <person name="Imose N."/>
            <person name="Musashino K."/>
            <person name="Yuuki H."/>
            <person name="Oshima A."/>
            <person name="Sasaki N."/>
            <person name="Aotsuka S."/>
            <person name="Yoshikawa Y."/>
            <person name="Matsunawa H."/>
            <person name="Ichihara T."/>
            <person name="Shiohata N."/>
            <person name="Sano S."/>
            <person name="Moriya S."/>
            <person name="Momiyama H."/>
            <person name="Satoh N."/>
            <person name="Takami S."/>
            <person name="Terashima Y."/>
            <person name="Suzuki O."/>
            <person name="Nakagawa S."/>
            <person name="Senoh A."/>
            <person name="Mizoguchi H."/>
            <person name="Goto Y."/>
            <person name="Shimizu F."/>
            <person name="Wakebe H."/>
            <person name="Hishigaki H."/>
            <person name="Watanabe T."/>
            <person name="Sugiyama A."/>
            <person name="Takemoto M."/>
            <person name="Kawakami B."/>
            <person name="Yamazaki M."/>
            <person name="Watanabe K."/>
            <person name="Kumagai A."/>
            <person name="Itakura S."/>
            <person name="Fukuzumi Y."/>
            <person name="Fujimori Y."/>
            <person name="Komiyama M."/>
            <person name="Tashiro H."/>
            <person name="Tanigami A."/>
            <person name="Fujiwara T."/>
            <person name="Ono T."/>
            <person name="Yamada K."/>
            <person name="Fujii Y."/>
            <person name="Ozaki K."/>
            <person name="Hirao M."/>
            <person name="Ohmori Y."/>
            <person name="Kawabata A."/>
            <person name="Hikiji T."/>
            <person name="Kobatake N."/>
            <person name="Inagaki H."/>
            <person name="Ikema Y."/>
            <person name="Okamoto S."/>
            <person name="Okitani R."/>
            <person name="Kawakami T."/>
            <person name="Noguchi S."/>
            <person name="Itoh T."/>
            <person name="Shigeta K."/>
            <person name="Senba T."/>
            <person name="Matsumura K."/>
            <person name="Nakajima Y."/>
            <person name="Mizuno T."/>
            <person name="Morinaga M."/>
            <person name="Sasaki M."/>
            <person name="Togashi T."/>
            <person name="Oyama M."/>
            <person name="Hata H."/>
            <person name="Watanabe M."/>
            <person name="Komatsu T."/>
            <person name="Mizushima-Sugano J."/>
            <person name="Satoh T."/>
            <person name="Shirai Y."/>
            <person name="Takahashi Y."/>
            <person name="Nakagawa K."/>
            <person name="Okumura K."/>
            <person name="Nagase T."/>
            <person name="Nomura N."/>
            <person name="Kikuchi H."/>
            <person name="Masuho Y."/>
            <person name="Yamashita R."/>
            <person name="Nakai K."/>
            <person name="Yada T."/>
            <person name="Nakamura Y."/>
            <person name="Ohara O."/>
            <person name="Isogai T."/>
            <person name="Sugano S."/>
        </authorList>
    </citation>
    <scope>NUCLEOTIDE SEQUENCE [LARGE SCALE MRNA]</scope>
    <scope>VARIANT VAL-317</scope>
    <source>
        <tissue>Embryo</tissue>
    </source>
</reference>
<reference key="4">
    <citation type="journal article" date="2004" name="Genome Res.">
        <title>The status, quality, and expansion of the NIH full-length cDNA project: the Mammalian Gene Collection (MGC).</title>
        <authorList>
            <consortium name="The MGC Project Team"/>
        </authorList>
    </citation>
    <scope>NUCLEOTIDE SEQUENCE [LARGE SCALE MRNA]</scope>
    <source>
        <tissue>Lung</tissue>
        <tissue>Muscle</tissue>
    </source>
</reference>
<reference key="5">
    <citation type="journal article" date="2001" name="Oncogene">
        <title>The ENL moiety of the childhood leukemia-associated MLL-ENL oncoprotein recruits human Polycomb 3.</title>
        <authorList>
            <person name="Garcia-Cuellar M.P."/>
            <person name="Zilles O."/>
            <person name="Schreiner S.A."/>
            <person name="Birke M."/>
            <person name="Winkler T.H."/>
            <person name="Slany R.K."/>
        </authorList>
    </citation>
    <scope>INTERACTION WITH MLLT3</scope>
</reference>
<reference key="6">
    <citation type="journal article" date="2002" name="Mol. Cell. Biol.">
        <title>The core of the polycomb repressive complex is compositionally and functionally conserved in flies and humans.</title>
        <authorList>
            <person name="Levine S.S."/>
            <person name="Weiss A."/>
            <person name="Erdjument-Bromage H."/>
            <person name="Shao Z."/>
            <person name="Tempst P."/>
            <person name="Kingston R.E."/>
        </authorList>
    </citation>
    <scope>IDENTIFICATION BY MASS SPECTROMETRY</scope>
    <scope>IDENTIFICATION IN A PRC1-LIKE HPRC-H COMPLEX WITH BMI1; CBX2; CBX4; PHC1; PHC2; PHC3; RING1 AND RNF2</scope>
</reference>
<reference key="7">
    <citation type="journal article" date="2008" name="Mol. Cell">
        <title>Kinase-selective enrichment enables quantitative phosphoproteomics of the kinome across the cell cycle.</title>
        <authorList>
            <person name="Daub H."/>
            <person name="Olsen J.V."/>
            <person name="Bairlein M."/>
            <person name="Gnad F."/>
            <person name="Oppermann F.S."/>
            <person name="Korner R."/>
            <person name="Greff Z."/>
            <person name="Keri G."/>
            <person name="Stemmann O."/>
            <person name="Mann M."/>
        </authorList>
    </citation>
    <scope>IDENTIFICATION BY MASS SPECTROMETRY [LARGE SCALE ANALYSIS]</scope>
    <source>
        <tissue>Cervix carcinoma</tissue>
    </source>
</reference>
<reference key="8">
    <citation type="journal article" date="2008" name="Proc. Natl. Acad. Sci. U.S.A.">
        <title>A quantitative atlas of mitotic phosphorylation.</title>
        <authorList>
            <person name="Dephoure N."/>
            <person name="Zhou C."/>
            <person name="Villen J."/>
            <person name="Beausoleil S.A."/>
            <person name="Bakalarski C.E."/>
            <person name="Elledge S.J."/>
            <person name="Gygi S.P."/>
        </authorList>
    </citation>
    <scope>PHOSPHORYLATION [LARGE SCALE ANALYSIS] AT SER-110; SER-130; SER-256; SER-265 AND SER-352</scope>
    <scope>IDENTIFICATION BY MASS SPECTROMETRY [LARGE SCALE ANALYSIS]</scope>
    <source>
        <tissue>Cervix carcinoma</tissue>
    </source>
</reference>
<reference key="9">
    <citation type="journal article" date="2009" name="PLoS ONE">
        <title>Several distinct polycomb complexes regulate and co-localize on the INK4a tumor suppressor locus.</title>
        <authorList>
            <person name="Maertens G.N."/>
            <person name="El Messaoudi-Aubert S."/>
            <person name="Racek T."/>
            <person name="Stock J.K."/>
            <person name="Nicholls J."/>
            <person name="Rodriguez-Niedenfuhr M."/>
            <person name="Gil J."/>
            <person name="Peters G."/>
        </authorList>
    </citation>
    <scope>IDENTIFICATION IN A PRC1-LIKE COMPLEX</scope>
    <scope>INTERACTION WITH BMI1 AND PCGF2</scope>
</reference>
<reference key="10">
    <citation type="journal article" date="2009" name="Sci. Signal.">
        <title>Quantitative phosphoproteomic analysis of T cell receptor signaling reveals system-wide modulation of protein-protein interactions.</title>
        <authorList>
            <person name="Mayya V."/>
            <person name="Lundgren D.H."/>
            <person name="Hwang S.-I."/>
            <person name="Rezaul K."/>
            <person name="Wu L."/>
            <person name="Eng J.K."/>
            <person name="Rodionov V."/>
            <person name="Han D.K."/>
        </authorList>
    </citation>
    <scope>PHOSPHORYLATION [LARGE SCALE ANALYSIS] AT SER-256</scope>
    <scope>IDENTIFICATION BY MASS SPECTROMETRY [LARGE SCALE ANALYSIS]</scope>
    <source>
        <tissue>Leukemic T-cell</tissue>
    </source>
</reference>
<reference key="11">
    <citation type="journal article" date="2010" name="Sci. Signal.">
        <title>Quantitative phosphoproteomics reveals widespread full phosphorylation site occupancy during mitosis.</title>
        <authorList>
            <person name="Olsen J.V."/>
            <person name="Vermeulen M."/>
            <person name="Santamaria A."/>
            <person name="Kumar C."/>
            <person name="Miller M.L."/>
            <person name="Jensen L.J."/>
            <person name="Gnad F."/>
            <person name="Cox J."/>
            <person name="Jensen T.S."/>
            <person name="Nigg E.A."/>
            <person name="Brunak S."/>
            <person name="Mann M."/>
        </authorList>
    </citation>
    <scope>PHOSPHORYLATION [LARGE SCALE ANALYSIS] AT SER-110; SER-191 AND SER-352</scope>
    <scope>IDENTIFICATION BY MASS SPECTROMETRY [LARGE SCALE ANALYSIS]</scope>
    <source>
        <tissue>Cervix carcinoma</tissue>
    </source>
</reference>
<reference key="12">
    <citation type="journal article" date="2011" name="BMC Syst. Biol.">
        <title>Initial characterization of the human central proteome.</title>
        <authorList>
            <person name="Burkard T.R."/>
            <person name="Planyavsky M."/>
            <person name="Kaupe I."/>
            <person name="Breitwieser F.P."/>
            <person name="Buerckstuemmer T."/>
            <person name="Bennett K.L."/>
            <person name="Superti-Furga G."/>
            <person name="Colinge J."/>
        </authorList>
    </citation>
    <scope>IDENTIFICATION BY MASS SPECTROMETRY [LARGE SCALE ANALYSIS]</scope>
</reference>
<reference key="13">
    <citation type="journal article" date="2011" name="Mol. Cell. Proteomics">
        <title>Interaction proteomics analysis of polycomb proteins defines distinct PRC1 Complexes in mammalian cells.</title>
        <authorList>
            <person name="Vandamme J."/>
            <person name="Volkel P."/>
            <person name="Rosnoblet C."/>
            <person name="Le Faou P."/>
            <person name="Angrand P.O."/>
        </authorList>
    </citation>
    <scope>FUNCTION</scope>
    <scope>IDENTIFICATION BY MASS SPECTROMETRY</scope>
    <scope>SUBCELLULAR LOCATION</scope>
    <scope>IDENTIFICATION IN A PRC1-LIKE COMPLEX</scope>
    <scope>INTERACTION WITH RING1; RNF2; PCGF1; PCGF2; PCGF3; BMI1; PCGF5 AND PCGF6</scope>
</reference>
<reference key="14">
    <citation type="journal article" date="2013" name="J. Proteome Res.">
        <title>Toward a comprehensive characterization of a human cancer cell phosphoproteome.</title>
        <authorList>
            <person name="Zhou H."/>
            <person name="Di Palma S."/>
            <person name="Preisinger C."/>
            <person name="Peng M."/>
            <person name="Polat A.N."/>
            <person name="Heck A.J."/>
            <person name="Mohammed S."/>
        </authorList>
    </citation>
    <scope>PHOSPHORYLATION [LARGE SCALE ANALYSIS] AT SER-110; SER-256; SER-265; SER-311 AND SER-332</scope>
    <scope>IDENTIFICATION BY MASS SPECTROMETRY [LARGE SCALE ANALYSIS]</scope>
    <source>
        <tissue>Cervix carcinoma</tissue>
        <tissue>Erythroleukemia</tissue>
    </source>
</reference>
<reference key="15">
    <citation type="journal article" date="2014" name="J. Proteomics">
        <title>An enzyme assisted RP-RPLC approach for in-depth analysis of human liver phosphoproteome.</title>
        <authorList>
            <person name="Bian Y."/>
            <person name="Song C."/>
            <person name="Cheng K."/>
            <person name="Dong M."/>
            <person name="Wang F."/>
            <person name="Huang J."/>
            <person name="Sun D."/>
            <person name="Wang L."/>
            <person name="Ye M."/>
            <person name="Zou H."/>
        </authorList>
    </citation>
    <scope>PHOSPHORYLATION [LARGE SCALE ANALYSIS] AT SER-256 AND SER-311</scope>
    <scope>IDENTIFICATION BY MASS SPECTROMETRY [LARGE SCALE ANALYSIS]</scope>
    <source>
        <tissue>Liver</tissue>
    </source>
</reference>
<reference key="16">
    <citation type="journal article" date="2011" name="J. Biol. Chem.">
        <title>Recognition and specificity determinants of the human cbx chromodomains.</title>
        <authorList>
            <person name="Kaustov L."/>
            <person name="Ouyang H."/>
            <person name="Amaya M."/>
            <person name="Lemak A."/>
            <person name="Nady N."/>
            <person name="Duan S."/>
            <person name="Wasney G.A."/>
            <person name="Li Z."/>
            <person name="Vedadi M."/>
            <person name="Schapira M."/>
            <person name="Min J."/>
            <person name="Arrowsmith C.H."/>
        </authorList>
    </citation>
    <scope>X-RAY CRYSTALLOGRAPHY (1.55 ANGSTROMS) OF 8-61 IN COMPLEX WITH HISTONE H3 PEPTIDE</scope>
</reference>
<feature type="chain" id="PRO_0000080215" description="Chromobox protein homolog 8">
    <location>
        <begin position="1"/>
        <end position="389"/>
    </location>
</feature>
<feature type="domain" description="Chromo" evidence="2">
    <location>
        <begin position="11"/>
        <end position="69"/>
    </location>
</feature>
<feature type="region of interest" description="Disordered" evidence="3">
    <location>
        <begin position="124"/>
        <end position="241"/>
    </location>
</feature>
<feature type="region of interest" description="Disordered" evidence="3">
    <location>
        <begin position="298"/>
        <end position="327"/>
    </location>
</feature>
<feature type="compositionally biased region" description="Basic and acidic residues" evidence="3">
    <location>
        <begin position="145"/>
        <end position="189"/>
    </location>
</feature>
<feature type="modified residue" description="Phosphoserine" evidence="7 9 10">
    <location>
        <position position="110"/>
    </location>
</feature>
<feature type="modified residue" description="Phosphoserine" evidence="7">
    <location>
        <position position="130"/>
    </location>
</feature>
<feature type="modified residue" description="Phosphoserine" evidence="9">
    <location>
        <position position="191"/>
    </location>
</feature>
<feature type="modified residue" description="Phosphoserine" evidence="7 8 10 11">
    <location>
        <position position="256"/>
    </location>
</feature>
<feature type="modified residue" description="Phosphoserine" evidence="7 10">
    <location>
        <position position="265"/>
    </location>
</feature>
<feature type="modified residue" description="Phosphoserine" evidence="10 11">
    <location>
        <position position="311"/>
    </location>
</feature>
<feature type="modified residue" description="Phosphoserine" evidence="10">
    <location>
        <position position="332"/>
    </location>
</feature>
<feature type="modified residue" description="Phosphoserine" evidence="7 9">
    <location>
        <position position="352"/>
    </location>
</feature>
<feature type="sequence variant" id="VAR_014954" description="In dbSNP:rs4889891." evidence="4 6">
    <original>G</original>
    <variation>V</variation>
    <location>
        <position position="317"/>
    </location>
</feature>
<feature type="strand" evidence="13">
    <location>
        <begin position="9"/>
        <end position="11"/>
    </location>
</feature>
<feature type="strand" evidence="13">
    <location>
        <begin position="13"/>
        <end position="22"/>
    </location>
</feature>
<feature type="strand" evidence="13">
    <location>
        <begin position="25"/>
        <end position="32"/>
    </location>
</feature>
<feature type="helix" evidence="13">
    <location>
        <begin position="37"/>
        <end position="39"/>
    </location>
</feature>
<feature type="strand" evidence="13">
    <location>
        <begin position="41"/>
        <end position="44"/>
    </location>
</feature>
<feature type="helix" evidence="13">
    <location>
        <begin position="45"/>
        <end position="47"/>
    </location>
</feature>
<feature type="helix" evidence="13">
    <location>
        <begin position="51"/>
        <end position="59"/>
    </location>
</feature>
<feature type="strand" evidence="12">
    <location>
        <begin position="334"/>
        <end position="336"/>
    </location>
</feature>
<feature type="helix" evidence="12">
    <location>
        <begin position="339"/>
        <end position="342"/>
    </location>
</feature>
<evidence type="ECO:0000250" key="1"/>
<evidence type="ECO:0000255" key="2">
    <source>
        <dbReference type="PROSITE-ProRule" id="PRU00053"/>
    </source>
</evidence>
<evidence type="ECO:0000256" key="3">
    <source>
        <dbReference type="SAM" id="MobiDB-lite"/>
    </source>
</evidence>
<evidence type="ECO:0000269" key="4">
    <source>
    </source>
</evidence>
<evidence type="ECO:0000269" key="5">
    <source>
    </source>
</evidence>
<evidence type="ECO:0000269" key="6">
    <source ref="2"/>
</evidence>
<evidence type="ECO:0007744" key="7">
    <source>
    </source>
</evidence>
<evidence type="ECO:0007744" key="8">
    <source>
    </source>
</evidence>
<evidence type="ECO:0007744" key="9">
    <source>
    </source>
</evidence>
<evidence type="ECO:0007744" key="10">
    <source>
    </source>
</evidence>
<evidence type="ECO:0007744" key="11">
    <source>
    </source>
</evidence>
<evidence type="ECO:0007829" key="12">
    <source>
        <dbReference type="PDB" id="2N4Q"/>
    </source>
</evidence>
<evidence type="ECO:0007829" key="13">
    <source>
        <dbReference type="PDB" id="5EQ0"/>
    </source>
</evidence>
<organism>
    <name type="scientific">Homo sapiens</name>
    <name type="common">Human</name>
    <dbReference type="NCBI Taxonomy" id="9606"/>
    <lineage>
        <taxon>Eukaryota</taxon>
        <taxon>Metazoa</taxon>
        <taxon>Chordata</taxon>
        <taxon>Craniata</taxon>
        <taxon>Vertebrata</taxon>
        <taxon>Euteleostomi</taxon>
        <taxon>Mammalia</taxon>
        <taxon>Eutheria</taxon>
        <taxon>Euarchontoglires</taxon>
        <taxon>Primates</taxon>
        <taxon>Haplorrhini</taxon>
        <taxon>Catarrhini</taxon>
        <taxon>Hominidae</taxon>
        <taxon>Homo</taxon>
    </lineage>
</organism>